<organism>
    <name type="scientific">Yarrowia lipolytica (strain CLIB 122 / E 150)</name>
    <name type="common">Yeast</name>
    <name type="synonym">Candida lipolytica</name>
    <dbReference type="NCBI Taxonomy" id="284591"/>
    <lineage>
        <taxon>Eukaryota</taxon>
        <taxon>Fungi</taxon>
        <taxon>Dikarya</taxon>
        <taxon>Ascomycota</taxon>
        <taxon>Saccharomycotina</taxon>
        <taxon>Dipodascomycetes</taxon>
        <taxon>Dipodascales</taxon>
        <taxon>Dipodascales incertae sedis</taxon>
        <taxon>Yarrowia</taxon>
    </lineage>
</organism>
<dbReference type="EMBL" id="CR382130">
    <property type="protein sequence ID" value="CAG81408.1"/>
    <property type="molecule type" value="Genomic_DNA"/>
</dbReference>
<dbReference type="RefSeq" id="XP_503208.1">
    <property type="nucleotide sequence ID" value="XM_503208.1"/>
</dbReference>
<dbReference type="SMR" id="Q6C804"/>
<dbReference type="FunCoup" id="Q6C804">
    <property type="interactions" value="948"/>
</dbReference>
<dbReference type="STRING" id="284591.Q6C804"/>
<dbReference type="EnsemblFungi" id="CAG81408">
    <property type="protein sequence ID" value="CAG81408"/>
    <property type="gene ID" value="YALI0_D23859g"/>
</dbReference>
<dbReference type="KEGG" id="yli:2910958"/>
<dbReference type="VEuPathDB" id="FungiDB:YALI0_D23859g"/>
<dbReference type="HOGENOM" id="CLU_040063_2_0_1"/>
<dbReference type="InParanoid" id="Q6C804"/>
<dbReference type="OMA" id="IGTMSEQ"/>
<dbReference type="OrthoDB" id="714at4891"/>
<dbReference type="Proteomes" id="UP000001300">
    <property type="component" value="Chromosome D"/>
</dbReference>
<dbReference type="GO" id="GO:0034457">
    <property type="term" value="C:Mpp10 complex"/>
    <property type="evidence" value="ECO:0000318"/>
    <property type="project" value="GO_Central"/>
</dbReference>
<dbReference type="GO" id="GO:0005730">
    <property type="term" value="C:nucleolus"/>
    <property type="evidence" value="ECO:0000318"/>
    <property type="project" value="GO_Central"/>
</dbReference>
<dbReference type="GO" id="GO:0032040">
    <property type="term" value="C:small-subunit processome"/>
    <property type="evidence" value="ECO:0000318"/>
    <property type="project" value="GO_Central"/>
</dbReference>
<dbReference type="GO" id="GO:0042134">
    <property type="term" value="F:rRNA primary transcript binding"/>
    <property type="evidence" value="ECO:0007669"/>
    <property type="project" value="InterPro"/>
</dbReference>
<dbReference type="GO" id="GO:0030515">
    <property type="term" value="F:snoRNA binding"/>
    <property type="evidence" value="ECO:0000318"/>
    <property type="project" value="GO_Central"/>
</dbReference>
<dbReference type="GO" id="GO:0006364">
    <property type="term" value="P:rRNA processing"/>
    <property type="evidence" value="ECO:0000318"/>
    <property type="project" value="GO_Central"/>
</dbReference>
<dbReference type="FunFam" id="3.40.50.10480:FF:000001">
    <property type="entry name" value="IMP4, U3 small nucleolar ribonucleoprotein"/>
    <property type="match status" value="1"/>
</dbReference>
<dbReference type="Gene3D" id="3.40.50.10480">
    <property type="entry name" value="Probable brix-domain ribosomal biogenesis protein"/>
    <property type="match status" value="1"/>
</dbReference>
<dbReference type="InterPro" id="IPR007109">
    <property type="entry name" value="Brix"/>
</dbReference>
<dbReference type="InterPro" id="IPR044281">
    <property type="entry name" value="IMP4/RPF1"/>
</dbReference>
<dbReference type="PANTHER" id="PTHR22734">
    <property type="entry name" value="U3 SMALL NUCLEOLAR RIBONUCLEOPROTEIN PROTEIN IMP4"/>
    <property type="match status" value="1"/>
</dbReference>
<dbReference type="PANTHER" id="PTHR22734:SF2">
    <property type="entry name" value="U3 SMALL NUCLEOLAR RIBONUCLEOPROTEIN PROTEIN IMP4"/>
    <property type="match status" value="1"/>
</dbReference>
<dbReference type="Pfam" id="PF04427">
    <property type="entry name" value="Brix"/>
    <property type="match status" value="1"/>
</dbReference>
<dbReference type="SMART" id="SM00879">
    <property type="entry name" value="Brix"/>
    <property type="match status" value="1"/>
</dbReference>
<dbReference type="SUPFAM" id="SSF52954">
    <property type="entry name" value="Class II aaRS ABD-related"/>
    <property type="match status" value="1"/>
</dbReference>
<dbReference type="PROSITE" id="PS50833">
    <property type="entry name" value="BRIX"/>
    <property type="match status" value="1"/>
</dbReference>
<feature type="chain" id="PRO_0000120244" description="U3 small nucleolar ribonucleoprotein protein IMP4">
    <location>
        <begin position="1"/>
        <end position="283"/>
    </location>
</feature>
<feature type="domain" description="Brix" evidence="2">
    <location>
        <begin position="79"/>
        <end position="260"/>
    </location>
</feature>
<reference key="1">
    <citation type="journal article" date="2004" name="Nature">
        <title>Genome evolution in yeasts.</title>
        <authorList>
            <person name="Dujon B."/>
            <person name="Sherman D."/>
            <person name="Fischer G."/>
            <person name="Durrens P."/>
            <person name="Casaregola S."/>
            <person name="Lafontaine I."/>
            <person name="de Montigny J."/>
            <person name="Marck C."/>
            <person name="Neuveglise C."/>
            <person name="Talla E."/>
            <person name="Goffard N."/>
            <person name="Frangeul L."/>
            <person name="Aigle M."/>
            <person name="Anthouard V."/>
            <person name="Babour A."/>
            <person name="Barbe V."/>
            <person name="Barnay S."/>
            <person name="Blanchin S."/>
            <person name="Beckerich J.-M."/>
            <person name="Beyne E."/>
            <person name="Bleykasten C."/>
            <person name="Boisrame A."/>
            <person name="Boyer J."/>
            <person name="Cattolico L."/>
            <person name="Confanioleri F."/>
            <person name="de Daruvar A."/>
            <person name="Despons L."/>
            <person name="Fabre E."/>
            <person name="Fairhead C."/>
            <person name="Ferry-Dumazet H."/>
            <person name="Groppi A."/>
            <person name="Hantraye F."/>
            <person name="Hennequin C."/>
            <person name="Jauniaux N."/>
            <person name="Joyet P."/>
            <person name="Kachouri R."/>
            <person name="Kerrest A."/>
            <person name="Koszul R."/>
            <person name="Lemaire M."/>
            <person name="Lesur I."/>
            <person name="Ma L."/>
            <person name="Muller H."/>
            <person name="Nicaud J.-M."/>
            <person name="Nikolski M."/>
            <person name="Oztas S."/>
            <person name="Ozier-Kalogeropoulos O."/>
            <person name="Pellenz S."/>
            <person name="Potier S."/>
            <person name="Richard G.-F."/>
            <person name="Straub M.-L."/>
            <person name="Suleau A."/>
            <person name="Swennen D."/>
            <person name="Tekaia F."/>
            <person name="Wesolowski-Louvel M."/>
            <person name="Westhof E."/>
            <person name="Wirth B."/>
            <person name="Zeniou-Meyer M."/>
            <person name="Zivanovic Y."/>
            <person name="Bolotin-Fukuhara M."/>
            <person name="Thierry A."/>
            <person name="Bouchier C."/>
            <person name="Caudron B."/>
            <person name="Scarpelli C."/>
            <person name="Gaillardin C."/>
            <person name="Weissenbach J."/>
            <person name="Wincker P."/>
            <person name="Souciet J.-L."/>
        </authorList>
    </citation>
    <scope>NUCLEOTIDE SEQUENCE [LARGE SCALE GENOMIC DNA]</scope>
    <source>
        <strain>CLIB 122 / E 150</strain>
    </source>
</reference>
<comment type="function">
    <text evidence="1">Component of the U3 small nucleolar ribonucleoprotein. Required for the early cleavages at sites A0, A1 and A2 during 18S ribosomal pre-RNA processing (By similarity).</text>
</comment>
<comment type="subunit">
    <text evidence="1">Component of a heterotrimeric complex containing IMP3, IMP4 and MPP10.</text>
</comment>
<comment type="subcellular location">
    <subcellularLocation>
        <location evidence="1">Nucleus</location>
        <location evidence="1">Nucleolus</location>
    </subcellularLocation>
</comment>
<proteinExistence type="inferred from homology"/>
<evidence type="ECO:0000250" key="1"/>
<evidence type="ECO:0000255" key="2">
    <source>
        <dbReference type="PROSITE-ProRule" id="PRU00034"/>
    </source>
</evidence>
<protein>
    <recommendedName>
        <fullName>U3 small nucleolar ribonucleoprotein protein IMP4</fullName>
        <shortName>U3 snoRNP protein IMP4</shortName>
    </recommendedName>
</protein>
<keyword id="KW-0539">Nucleus</keyword>
<keyword id="KW-1185">Reference proteome</keyword>
<keyword id="KW-0687">Ribonucleoprotein</keyword>
<keyword id="KW-0690">Ribosome biogenesis</keyword>
<keyword id="KW-0698">rRNA processing</keyword>
<sequence>MIRRQARERREYLYRKSLQLQEATKIQKRQQLKAALASGKPLPKDVADDEELRKTIAYDESVQDEIDDEYSAMSGITDPKVVVTTSRDPSTRLSQFAKEVKLLFPTSIRLNRGGTVLPSLVSACKTSASSDLIVLHEHRGVPTAMTVSHFPHGPTAYFSLHNVVLRHDLPDTGNMSEVHPHLIFDNFTTDLGKRVVQILKHLFPPGVKKDSARVITFANRGDFISVRQHVYVKTREGVELAEVGPRFEMRLYDLRLGTLENKDADVEWRMHGFMRTANKKDYL</sequence>
<gene>
    <name type="primary">IMP4</name>
    <name type="ordered locus">YALI0D23859g</name>
</gene>
<name>IMP4_YARLI</name>
<accession>Q6C804</accession>